<organism>
    <name type="scientific">Bacillus subtilis (strain 168)</name>
    <dbReference type="NCBI Taxonomy" id="224308"/>
    <lineage>
        <taxon>Bacteria</taxon>
        <taxon>Bacillati</taxon>
        <taxon>Bacillota</taxon>
        <taxon>Bacilli</taxon>
        <taxon>Bacillales</taxon>
        <taxon>Bacillaceae</taxon>
        <taxon>Bacillus</taxon>
    </lineage>
</organism>
<name>RSGI_BACSU</name>
<reference key="1">
    <citation type="journal article" date="1997" name="Nature">
        <title>The complete genome sequence of the Gram-positive bacterium Bacillus subtilis.</title>
        <authorList>
            <person name="Kunst F."/>
            <person name="Ogasawara N."/>
            <person name="Moszer I."/>
            <person name="Albertini A.M."/>
            <person name="Alloni G."/>
            <person name="Azevedo V."/>
            <person name="Bertero M.G."/>
            <person name="Bessieres P."/>
            <person name="Bolotin A."/>
            <person name="Borchert S."/>
            <person name="Borriss R."/>
            <person name="Boursier L."/>
            <person name="Brans A."/>
            <person name="Braun M."/>
            <person name="Brignell S.C."/>
            <person name="Bron S."/>
            <person name="Brouillet S."/>
            <person name="Bruschi C.V."/>
            <person name="Caldwell B."/>
            <person name="Capuano V."/>
            <person name="Carter N.M."/>
            <person name="Choi S.-K."/>
            <person name="Codani J.-J."/>
            <person name="Connerton I.F."/>
            <person name="Cummings N.J."/>
            <person name="Daniel R.A."/>
            <person name="Denizot F."/>
            <person name="Devine K.M."/>
            <person name="Duesterhoeft A."/>
            <person name="Ehrlich S.D."/>
            <person name="Emmerson P.T."/>
            <person name="Entian K.-D."/>
            <person name="Errington J."/>
            <person name="Fabret C."/>
            <person name="Ferrari E."/>
            <person name="Foulger D."/>
            <person name="Fritz C."/>
            <person name="Fujita M."/>
            <person name="Fujita Y."/>
            <person name="Fuma S."/>
            <person name="Galizzi A."/>
            <person name="Galleron N."/>
            <person name="Ghim S.-Y."/>
            <person name="Glaser P."/>
            <person name="Goffeau A."/>
            <person name="Golightly E.J."/>
            <person name="Grandi G."/>
            <person name="Guiseppi G."/>
            <person name="Guy B.J."/>
            <person name="Haga K."/>
            <person name="Haiech J."/>
            <person name="Harwood C.R."/>
            <person name="Henaut A."/>
            <person name="Hilbert H."/>
            <person name="Holsappel S."/>
            <person name="Hosono S."/>
            <person name="Hullo M.-F."/>
            <person name="Itaya M."/>
            <person name="Jones L.-M."/>
            <person name="Joris B."/>
            <person name="Karamata D."/>
            <person name="Kasahara Y."/>
            <person name="Klaerr-Blanchard M."/>
            <person name="Klein C."/>
            <person name="Kobayashi Y."/>
            <person name="Koetter P."/>
            <person name="Koningstein G."/>
            <person name="Krogh S."/>
            <person name="Kumano M."/>
            <person name="Kurita K."/>
            <person name="Lapidus A."/>
            <person name="Lardinois S."/>
            <person name="Lauber J."/>
            <person name="Lazarevic V."/>
            <person name="Lee S.-M."/>
            <person name="Levine A."/>
            <person name="Liu H."/>
            <person name="Masuda S."/>
            <person name="Mauel C."/>
            <person name="Medigue C."/>
            <person name="Medina N."/>
            <person name="Mellado R.P."/>
            <person name="Mizuno M."/>
            <person name="Moestl D."/>
            <person name="Nakai S."/>
            <person name="Noback M."/>
            <person name="Noone D."/>
            <person name="O'Reilly M."/>
            <person name="Ogawa K."/>
            <person name="Ogiwara A."/>
            <person name="Oudega B."/>
            <person name="Park S.-H."/>
            <person name="Parro V."/>
            <person name="Pohl T.M."/>
            <person name="Portetelle D."/>
            <person name="Porwollik S."/>
            <person name="Prescott A.M."/>
            <person name="Presecan E."/>
            <person name="Pujic P."/>
            <person name="Purnelle B."/>
            <person name="Rapoport G."/>
            <person name="Rey M."/>
            <person name="Reynolds S."/>
            <person name="Rieger M."/>
            <person name="Rivolta C."/>
            <person name="Rocha E."/>
            <person name="Roche B."/>
            <person name="Rose M."/>
            <person name="Sadaie Y."/>
            <person name="Sato T."/>
            <person name="Scanlan E."/>
            <person name="Schleich S."/>
            <person name="Schroeter R."/>
            <person name="Scoffone F."/>
            <person name="Sekiguchi J."/>
            <person name="Sekowska A."/>
            <person name="Seror S.J."/>
            <person name="Serror P."/>
            <person name="Shin B.-S."/>
            <person name="Soldo B."/>
            <person name="Sorokin A."/>
            <person name="Tacconi E."/>
            <person name="Takagi T."/>
            <person name="Takahashi H."/>
            <person name="Takemaru K."/>
            <person name="Takeuchi M."/>
            <person name="Tamakoshi A."/>
            <person name="Tanaka T."/>
            <person name="Terpstra P."/>
            <person name="Tognoni A."/>
            <person name="Tosato V."/>
            <person name="Uchiyama S."/>
            <person name="Vandenbol M."/>
            <person name="Vannier F."/>
            <person name="Vassarotti A."/>
            <person name="Viari A."/>
            <person name="Wambutt R."/>
            <person name="Wedler E."/>
            <person name="Wedler H."/>
            <person name="Weitzenegger T."/>
            <person name="Winters P."/>
            <person name="Wipat A."/>
            <person name="Yamamoto H."/>
            <person name="Yamane K."/>
            <person name="Yasumoto K."/>
            <person name="Yata K."/>
            <person name="Yoshida K."/>
            <person name="Yoshikawa H.-F."/>
            <person name="Zumstein E."/>
            <person name="Yoshikawa H."/>
            <person name="Danchin A."/>
        </authorList>
    </citation>
    <scope>NUCLEOTIDE SEQUENCE [LARGE SCALE GENOMIC DNA]</scope>
    <source>
        <strain>168</strain>
    </source>
</reference>
<reference key="2">
    <citation type="journal article" date="2007" name="Microbiology">
        <title>Regulatory role of rsgI in sigI expression in Bacillus subtilis.</title>
        <authorList>
            <person name="Asai K."/>
            <person name="Ootsuji T."/>
            <person name="Obata K."/>
            <person name="Matsumoto T."/>
            <person name="Fujita Y."/>
            <person name="Sadaie Y."/>
        </authorList>
    </citation>
    <scope>FUNCTION AS ANTI-FACTOR OF SIGI</scope>
    <scope>INTERACTION WITH SIGI</scope>
    <scope>INDUCTION</scope>
    <source>
        <strain>168</strain>
    </source>
</reference>
<reference key="3">
    <citation type="journal article" date="2009" name="J. Bacteriol.">
        <title>The cell wall regulator sigmaI specifically suppresses the lethal phenotype of mbl mutants in Bacillus subtilis.</title>
        <authorList>
            <person name="Schirner K."/>
            <person name="Errington J."/>
        </authorList>
    </citation>
    <scope>DISRUPTION PHENOTYPE</scope>
    <source>
        <strain>168</strain>
    </source>
</reference>
<reference key="4">
    <citation type="journal article" date="2013" name="Mol. Microbiol.">
        <title>The WalRK (YycFG) and sigma(I) RsgI regulators cooperate to control CwlO and LytE expression in exponentially growing and stressed Bacillus subtilis cells.</title>
        <authorList>
            <person name="Salzberg L.I."/>
            <person name="Powell L."/>
            <person name="Hokamp K."/>
            <person name="Botella E."/>
            <person name="Noone D."/>
            <person name="Devine K.M."/>
        </authorList>
    </citation>
    <scope>INDUCTION</scope>
</reference>
<reference key="5">
    <citation type="journal article" date="2013" name="Res. Microbiol.">
        <title>The heat-inducible essential response regulator WalR positively regulates transcription of sigI, mreBH and lytE in Bacillus subtilis under heat stress.</title>
        <authorList>
            <person name="Huang W.Z."/>
            <person name="Wang J.J."/>
            <person name="Chen H.J."/>
            <person name="Chen J.T."/>
            <person name="Shaw G.C."/>
        </authorList>
    </citation>
    <scope>INDUCTION</scope>
</reference>
<proteinExistence type="evidence at protein level"/>
<accession>O31655</accession>
<sequence length="381" mass="43589">MRRGIIVEKNKKFVTLLTPDGQFLKAKNDRHSYEIGEEIMLPSETRMGRRASFFDFFKLRPFKMGIFTMTAIMLFIFIVLPVFSNNKAYAYMTIDINPSVEMALNSDYEVIELTPLNDEGQKVVNDIDDWEKTDFKKVIDDIITDCSEHGYVKKSKEILISTVYENTEDNTYKKAVKKQLNDVTEKYKTTYRMESLESDMQTREKAKKEGVSTGSYIKSNEKNDNKDIKDDSSKPSGEEDQKSDENEDENTDQTDTQDSKQGDNEQLNDADSGDQKEEKADDQIDDSDKDKKIKESDENTNTEKDGDHEQTPIQDPQDKGNENNGADKGQSQYHRDWNNGEQGKNRSSSRRDNASDRRNPNGYSSDNHSAKNEDSPSAPGE</sequence>
<evidence type="ECO:0000255" key="1"/>
<evidence type="ECO:0000255" key="2">
    <source>
        <dbReference type="PROSITE-ProRule" id="PRU01196"/>
    </source>
</evidence>
<evidence type="ECO:0000256" key="3">
    <source>
        <dbReference type="SAM" id="MobiDB-lite"/>
    </source>
</evidence>
<evidence type="ECO:0000269" key="4">
    <source>
    </source>
</evidence>
<evidence type="ECO:0000269" key="5">
    <source>
    </source>
</evidence>
<evidence type="ECO:0000269" key="6">
    <source>
    </source>
</evidence>
<evidence type="ECO:0000269" key="7">
    <source>
    </source>
</evidence>
<evidence type="ECO:0000303" key="8">
    <source>
    </source>
</evidence>
<evidence type="ECO:0000305" key="9"/>
<evidence type="ECO:0007829" key="10">
    <source>
        <dbReference type="PDB" id="8T9N"/>
    </source>
</evidence>
<gene>
    <name evidence="8" type="primary">rsgI</name>
    <name type="synonym">ykrI</name>
    <name type="ordered locus">BSU13460</name>
</gene>
<keyword id="KW-0002">3D-structure</keyword>
<keyword id="KW-1003">Cell membrane</keyword>
<keyword id="KW-0472">Membrane</keyword>
<keyword id="KW-1185">Reference proteome</keyword>
<keyword id="KW-0346">Stress response</keyword>
<keyword id="KW-0812">Transmembrane</keyword>
<keyword id="KW-1133">Transmembrane helix</keyword>
<dbReference type="EMBL" id="AL009126">
    <property type="protein sequence ID" value="CAB13219.1"/>
    <property type="molecule type" value="Genomic_DNA"/>
</dbReference>
<dbReference type="PIR" id="E69862">
    <property type="entry name" value="E69862"/>
</dbReference>
<dbReference type="RefSeq" id="NP_389229.1">
    <property type="nucleotide sequence ID" value="NC_000964.3"/>
</dbReference>
<dbReference type="RefSeq" id="WP_003244727.1">
    <property type="nucleotide sequence ID" value="NZ_OZ025638.1"/>
</dbReference>
<dbReference type="PDB" id="8T9N">
    <property type="method" value="X-ray"/>
    <property type="resolution" value="1.90 A"/>
    <property type="chains" value="A/B=88-219"/>
</dbReference>
<dbReference type="PDBsum" id="8T9N"/>
<dbReference type="SMR" id="O31655"/>
<dbReference type="FunCoup" id="O31655">
    <property type="interactions" value="72"/>
</dbReference>
<dbReference type="STRING" id="224308.BSU13460"/>
<dbReference type="PaxDb" id="224308-BSU13460"/>
<dbReference type="DNASU" id="939360"/>
<dbReference type="EnsemblBacteria" id="CAB13219">
    <property type="protein sequence ID" value="CAB13219"/>
    <property type="gene ID" value="BSU_13460"/>
</dbReference>
<dbReference type="GeneID" id="939360"/>
<dbReference type="KEGG" id="bsu:BSU13460"/>
<dbReference type="PATRIC" id="fig|224308.179.peg.1461"/>
<dbReference type="eggNOG" id="ENOG5032YNU">
    <property type="taxonomic scope" value="Bacteria"/>
</dbReference>
<dbReference type="InParanoid" id="O31655"/>
<dbReference type="OrthoDB" id="9800626at2"/>
<dbReference type="BioCyc" id="BSUB:BSU13460-MONOMER"/>
<dbReference type="Proteomes" id="UP000001570">
    <property type="component" value="Chromosome"/>
</dbReference>
<dbReference type="GO" id="GO:0005886">
    <property type="term" value="C:plasma membrane"/>
    <property type="evidence" value="ECO:0007669"/>
    <property type="project" value="UniProtKB-SubCell"/>
</dbReference>
<dbReference type="InterPro" id="IPR024449">
    <property type="entry name" value="Anti-sigma_RsgI_N"/>
</dbReference>
<dbReference type="InterPro" id="IPR055431">
    <property type="entry name" value="RsgI_M"/>
</dbReference>
<dbReference type="Pfam" id="PF23750">
    <property type="entry name" value="RsgI_M"/>
    <property type="match status" value="1"/>
</dbReference>
<dbReference type="Pfam" id="PF12791">
    <property type="entry name" value="RsgI_N"/>
    <property type="match status" value="1"/>
</dbReference>
<dbReference type="PROSITE" id="PS51849">
    <property type="entry name" value="RSGI_N"/>
    <property type="match status" value="1"/>
</dbReference>
<protein>
    <recommendedName>
        <fullName evidence="9">Anti-sigma-I factor RsgI</fullName>
    </recommendedName>
    <alternativeName>
        <fullName evidence="9">Regulation of sigma I protein</fullName>
    </alternativeName>
</protein>
<feature type="chain" id="PRO_0000379971" description="Anti-sigma-I factor RsgI">
    <location>
        <begin position="1"/>
        <end position="381"/>
    </location>
</feature>
<feature type="topological domain" description="Cytoplasmic" evidence="9">
    <location>
        <begin position="1"/>
        <end position="63"/>
    </location>
</feature>
<feature type="transmembrane region" description="Helical" evidence="1">
    <location>
        <begin position="64"/>
        <end position="84"/>
    </location>
</feature>
<feature type="topological domain" description="Extracellular" evidence="9">
    <location>
        <begin position="85"/>
        <end position="381"/>
    </location>
</feature>
<feature type="domain" description="RsgI N-terminal anti-sigma" evidence="2">
    <location>
        <begin position="2"/>
        <end position="50"/>
    </location>
</feature>
<feature type="region of interest" description="Disordered" evidence="3">
    <location>
        <begin position="198"/>
        <end position="381"/>
    </location>
</feature>
<feature type="compositionally biased region" description="Basic and acidic residues" evidence="3">
    <location>
        <begin position="200"/>
        <end position="210"/>
    </location>
</feature>
<feature type="compositionally biased region" description="Basic and acidic residues" evidence="3">
    <location>
        <begin position="219"/>
        <end position="244"/>
    </location>
</feature>
<feature type="compositionally biased region" description="Basic and acidic residues" evidence="3">
    <location>
        <begin position="273"/>
        <end position="321"/>
    </location>
</feature>
<feature type="compositionally biased region" description="Basic and acidic residues" evidence="3">
    <location>
        <begin position="349"/>
        <end position="359"/>
    </location>
</feature>
<feature type="strand" evidence="10">
    <location>
        <begin position="90"/>
        <end position="97"/>
    </location>
</feature>
<feature type="strand" evidence="10">
    <location>
        <begin position="99"/>
        <end position="104"/>
    </location>
</feature>
<feature type="strand" evidence="10">
    <location>
        <begin position="108"/>
        <end position="115"/>
    </location>
</feature>
<feature type="helix" evidence="10">
    <location>
        <begin position="118"/>
        <end position="126"/>
    </location>
</feature>
<feature type="helix" evidence="10">
    <location>
        <begin position="135"/>
        <end position="148"/>
    </location>
</feature>
<feature type="strand" evidence="10">
    <location>
        <begin position="157"/>
        <end position="165"/>
    </location>
</feature>
<feature type="helix" evidence="10">
    <location>
        <begin position="170"/>
        <end position="187"/>
    </location>
</feature>
<feature type="turn" evidence="10">
    <location>
        <begin position="188"/>
        <end position="190"/>
    </location>
</feature>
<feature type="strand" evidence="10">
    <location>
        <begin position="191"/>
        <end position="198"/>
    </location>
</feature>
<feature type="helix" evidence="10">
    <location>
        <begin position="200"/>
        <end position="208"/>
    </location>
</feature>
<feature type="helix" evidence="10">
    <location>
        <begin position="213"/>
        <end position="217"/>
    </location>
</feature>
<comment type="function">
    <text evidence="4">Anti-sigma factor for SigI. Negatively regulates SigI activity through direct interaction.</text>
</comment>
<comment type="subunit">
    <text evidence="2 4">Interacts (via RsgI N-terminal anti-sigma domain) with SigI.</text>
</comment>
<comment type="subcellular location">
    <subcellularLocation>
        <location evidence="9">Cell membrane</location>
        <topology evidence="1">Single-pass membrane protein</topology>
    </subcellularLocation>
</comment>
<comment type="induction">
    <text evidence="4 6 7">Part of the sigI-rsgI operon, which is transiently induced by heat stress. Expression is positively regulated by SigI via the sigma-I promoter (PubMed:17185538). In exponentially growing cells, expression is regulated by the WalRK two-component system, which represses the sigma-I promoter and activates the sigma-A promoter, leading to the formation of a basal level of RsgI (PubMed:23199363). WalRK can also positively and directly regulate transcription of the operon under heat stress through a binding site located upstream of the sigma-I promoter (PubMed:24125693). Repressed by glucose (PubMed:17185538).</text>
</comment>
<comment type="disruption phenotype">
    <text evidence="5">Cells lacking this gene exhibit normal cell morphology and growth rate at 37 degrees Celsius, however cell diameter is slightly decreased.</text>
</comment>